<comment type="function">
    <text evidence="1">This protein is an aporepressor. When complexed with L-tryptophan it binds the operator region of the trp operon and prevents the initiation of transcription.</text>
</comment>
<comment type="subunit">
    <text evidence="1">Homodimer.</text>
</comment>
<comment type="subcellular location">
    <subcellularLocation>
        <location evidence="1">Cytoplasm</location>
    </subcellularLocation>
</comment>
<comment type="similarity">
    <text evidence="1">Belongs to the TrpR family.</text>
</comment>
<protein>
    <recommendedName>
        <fullName evidence="1">Trp operon repressor homolog</fullName>
    </recommendedName>
</protein>
<name>TRPR_XYLF2</name>
<proteinExistence type="inferred from homology"/>
<keyword id="KW-0963">Cytoplasm</keyword>
<keyword id="KW-0238">DNA-binding</keyword>
<keyword id="KW-0678">Repressor</keyword>
<keyword id="KW-0804">Transcription</keyword>
<keyword id="KW-0805">Transcription regulation</keyword>
<evidence type="ECO:0000255" key="1">
    <source>
        <dbReference type="HAMAP-Rule" id="MF_00475"/>
    </source>
</evidence>
<organism>
    <name type="scientific">Xylella fastidiosa (strain M23)</name>
    <dbReference type="NCBI Taxonomy" id="405441"/>
    <lineage>
        <taxon>Bacteria</taxon>
        <taxon>Pseudomonadati</taxon>
        <taxon>Pseudomonadota</taxon>
        <taxon>Gammaproteobacteria</taxon>
        <taxon>Lysobacterales</taxon>
        <taxon>Lysobacteraceae</taxon>
        <taxon>Xylella</taxon>
    </lineage>
</organism>
<accession>B2I4R3</accession>
<feature type="chain" id="PRO_1000197161" description="Trp operon repressor homolog">
    <location>
        <begin position="1"/>
        <end position="92"/>
    </location>
</feature>
<feature type="DNA-binding region" evidence="1">
    <location>
        <begin position="56"/>
        <end position="79"/>
    </location>
</feature>
<reference key="1">
    <citation type="journal article" date="2010" name="J. Bacteriol.">
        <title>Whole genome sequences of two Xylella fastidiosa strains (M12 and M23) causing almond leaf scorch disease in California.</title>
        <authorList>
            <person name="Chen J."/>
            <person name="Xie G."/>
            <person name="Han S."/>
            <person name="Chertkov O."/>
            <person name="Sims D."/>
            <person name="Civerolo E.L."/>
        </authorList>
    </citation>
    <scope>NUCLEOTIDE SEQUENCE [LARGE SCALE GENOMIC DNA]</scope>
    <source>
        <strain>M23</strain>
    </source>
</reference>
<dbReference type="EMBL" id="CP001011">
    <property type="protein sequence ID" value="ACB92358.1"/>
    <property type="molecule type" value="Genomic_DNA"/>
</dbReference>
<dbReference type="RefSeq" id="WP_004572878.1">
    <property type="nucleotide sequence ID" value="NC_010577.1"/>
</dbReference>
<dbReference type="SMR" id="B2I4R3"/>
<dbReference type="GeneID" id="93904659"/>
<dbReference type="KEGG" id="xfn:XfasM23_0924"/>
<dbReference type="HOGENOM" id="CLU_2573116_0_0_6"/>
<dbReference type="Proteomes" id="UP000001698">
    <property type="component" value="Chromosome"/>
</dbReference>
<dbReference type="GO" id="GO:0005737">
    <property type="term" value="C:cytoplasm"/>
    <property type="evidence" value="ECO:0007669"/>
    <property type="project" value="UniProtKB-SubCell"/>
</dbReference>
<dbReference type="GO" id="GO:0003700">
    <property type="term" value="F:DNA-binding transcription factor activity"/>
    <property type="evidence" value="ECO:0007669"/>
    <property type="project" value="InterPro"/>
</dbReference>
<dbReference type="GO" id="GO:0043565">
    <property type="term" value="F:sequence-specific DNA binding"/>
    <property type="evidence" value="ECO:0007669"/>
    <property type="project" value="InterPro"/>
</dbReference>
<dbReference type="GO" id="GO:0045892">
    <property type="term" value="P:negative regulation of DNA-templated transcription"/>
    <property type="evidence" value="ECO:0007669"/>
    <property type="project" value="UniProtKB-UniRule"/>
</dbReference>
<dbReference type="Gene3D" id="1.10.1270.10">
    <property type="entry name" value="TrpR-like"/>
    <property type="match status" value="1"/>
</dbReference>
<dbReference type="HAMAP" id="MF_00475">
    <property type="entry name" value="Trp_repressor"/>
    <property type="match status" value="1"/>
</dbReference>
<dbReference type="InterPro" id="IPR000831">
    <property type="entry name" value="Trp_repress"/>
</dbReference>
<dbReference type="InterPro" id="IPR013335">
    <property type="entry name" value="Trp_repress_bac"/>
</dbReference>
<dbReference type="InterPro" id="IPR010921">
    <property type="entry name" value="Trp_repressor/repl_initiator"/>
</dbReference>
<dbReference type="InterPro" id="IPR038116">
    <property type="entry name" value="TrpR-like_sf"/>
</dbReference>
<dbReference type="NCBIfam" id="TIGR01321">
    <property type="entry name" value="TrpR"/>
    <property type="match status" value="1"/>
</dbReference>
<dbReference type="PANTHER" id="PTHR38025">
    <property type="entry name" value="TRP OPERON REPRESSOR"/>
    <property type="match status" value="1"/>
</dbReference>
<dbReference type="PANTHER" id="PTHR38025:SF1">
    <property type="entry name" value="TRP OPERON REPRESSOR"/>
    <property type="match status" value="1"/>
</dbReference>
<dbReference type="Pfam" id="PF01371">
    <property type="entry name" value="Trp_repressor"/>
    <property type="match status" value="1"/>
</dbReference>
<dbReference type="PIRSF" id="PIRSF003196">
    <property type="entry name" value="Trp_repressor"/>
    <property type="match status" value="1"/>
</dbReference>
<dbReference type="SUPFAM" id="SSF48295">
    <property type="entry name" value="TrpR-like"/>
    <property type="match status" value="1"/>
</dbReference>
<gene>
    <name evidence="1" type="primary">trpR</name>
    <name type="ordered locus">XfasM23_0924</name>
</gene>
<sequence>MSREQAFEMLIKILCKTDSTDDMKLILECILTRSEMEDLIDRIRIYNELLNTSNSQREVASKLGVSITKITRGAANLQDNNIKDFLRKKISY</sequence>